<comment type="function">
    <text evidence="1">Catalyzes the oxidative decarboxylation of 6-phosphogluconate to ribulose 5-phosphate and CO(2), with concomitant reduction of NADP to NADPH.</text>
</comment>
<comment type="catalytic activity">
    <reaction>
        <text>6-phospho-D-gluconate + NADP(+) = D-ribulose 5-phosphate + CO2 + NADPH</text>
        <dbReference type="Rhea" id="RHEA:10116"/>
        <dbReference type="ChEBI" id="CHEBI:16526"/>
        <dbReference type="ChEBI" id="CHEBI:57783"/>
        <dbReference type="ChEBI" id="CHEBI:58121"/>
        <dbReference type="ChEBI" id="CHEBI:58349"/>
        <dbReference type="ChEBI" id="CHEBI:58759"/>
        <dbReference type="EC" id="1.1.1.44"/>
    </reaction>
</comment>
<comment type="pathway">
    <text>Carbohydrate degradation; pentose phosphate pathway; D-ribulose 5-phosphate from D-glucose 6-phosphate (oxidative stage): step 3/3.</text>
</comment>
<comment type="subunit">
    <text evidence="1">Homodimer.</text>
</comment>
<comment type="similarity">
    <text evidence="2">Belongs to the 6-phosphogluconate dehydrogenase family.</text>
</comment>
<name>6PGD_SHIBO</name>
<keyword id="KW-0311">Gluconate utilization</keyword>
<keyword id="KW-0521">NADP</keyword>
<keyword id="KW-0560">Oxidoreductase</keyword>
<keyword id="KW-0570">Pentose shunt</keyword>
<proteinExistence type="inferred from homology"/>
<gene>
    <name type="primary">gnd</name>
</gene>
<reference key="1">
    <citation type="journal article" date="1994" name="Proc. Natl. Acad. Sci. U.S.A.">
        <title>Intergeneric transfer and recombination of the 6-phosphogluconate dehydrogenase gene (gnd) in enteric bacteria.</title>
        <authorList>
            <person name="Nelson K."/>
            <person name="Selander R.K."/>
        </authorList>
    </citation>
    <scope>NUCLEOTIDE SEQUENCE [GENOMIC DNA]</scope>
    <source>
        <strain>ATCC 8700 / DSM 7532 / NCTC 12985</strain>
    </source>
</reference>
<organism>
    <name type="scientific">Shigella boydii</name>
    <dbReference type="NCBI Taxonomy" id="621"/>
    <lineage>
        <taxon>Bacteria</taxon>
        <taxon>Pseudomonadati</taxon>
        <taxon>Pseudomonadota</taxon>
        <taxon>Gammaproteobacteria</taxon>
        <taxon>Enterobacterales</taxon>
        <taxon>Enterobacteriaceae</taxon>
        <taxon>Shigella</taxon>
    </lineage>
</organism>
<sequence length="445" mass="48833">AVMGRNLALNIESRGYTVSIFNRSREKTEEVIAENPGKKLVPYYTVKEFVESLETPRRILLMVKAGAGTDAAIDSLKPYLDKGDIIIDGGNTFFQDTIRRNRELSAEGFNFIGTGVSGGEEGALKGPSIMPGGQKEAYELVAPILTKIAAVAEDGEPCVTYIGADGAGHYVKMVHNGIEYGDMQLIAEAYSLLKGGLNLSNEELAQTFTEWNNGELSSYLIDITKDIFTKKDEDGNYLVDVILDEAANKGTGKWTSQSALDLGEPLSLITESVFARYISSLKDQRVAASKVLSGPQAQPAGNKAEFIEKVRRALYLGKIVSYAQGFSQLRAASEEYNWDLNYGEIAKIFRAGCIIRAQFLQKITDAYAENPQIANLLLAPYFKQIADDYQQALRDVVAYAVQNGIPVPTFAAAVAYYDSYRAAVLPANLIQAQRDYFGAHTYKRI</sequence>
<dbReference type="EC" id="1.1.1.44"/>
<dbReference type="EMBL" id="U14469">
    <property type="protein sequence ID" value="AAC43820.1"/>
    <property type="molecule type" value="Genomic_DNA"/>
</dbReference>
<dbReference type="SMR" id="P41578"/>
<dbReference type="UniPathway" id="UPA00115">
    <property type="reaction ID" value="UER00410"/>
</dbReference>
<dbReference type="GO" id="GO:0050661">
    <property type="term" value="F:NADP binding"/>
    <property type="evidence" value="ECO:0007669"/>
    <property type="project" value="InterPro"/>
</dbReference>
<dbReference type="GO" id="GO:0004616">
    <property type="term" value="F:phosphogluconate dehydrogenase (decarboxylating) activity"/>
    <property type="evidence" value="ECO:0000250"/>
    <property type="project" value="UniProtKB"/>
</dbReference>
<dbReference type="GO" id="GO:0019521">
    <property type="term" value="P:D-gluconate metabolic process"/>
    <property type="evidence" value="ECO:0007669"/>
    <property type="project" value="UniProtKB-KW"/>
</dbReference>
<dbReference type="GO" id="GO:0016054">
    <property type="term" value="P:organic acid catabolic process"/>
    <property type="evidence" value="ECO:0007669"/>
    <property type="project" value="UniProtKB-ARBA"/>
</dbReference>
<dbReference type="GO" id="GO:0006098">
    <property type="term" value="P:pentose-phosphate shunt"/>
    <property type="evidence" value="ECO:0000250"/>
    <property type="project" value="UniProtKB"/>
</dbReference>
<dbReference type="FunFam" id="1.10.1040.10:FF:000002">
    <property type="entry name" value="6-phosphogluconate dehydrogenase, decarboxylating"/>
    <property type="match status" value="1"/>
</dbReference>
<dbReference type="FunFam" id="3.40.50.720:FF:000007">
    <property type="entry name" value="6-phosphogluconate dehydrogenase, decarboxylating"/>
    <property type="match status" value="1"/>
</dbReference>
<dbReference type="Gene3D" id="1.20.5.320">
    <property type="entry name" value="6-Phosphogluconate Dehydrogenase, domain 3"/>
    <property type="match status" value="1"/>
</dbReference>
<dbReference type="Gene3D" id="1.10.1040.10">
    <property type="entry name" value="N-(1-d-carboxylethyl)-l-norvaline Dehydrogenase, domain 2"/>
    <property type="match status" value="1"/>
</dbReference>
<dbReference type="Gene3D" id="3.40.50.720">
    <property type="entry name" value="NAD(P)-binding Rossmann-like Domain"/>
    <property type="match status" value="1"/>
</dbReference>
<dbReference type="InterPro" id="IPR008927">
    <property type="entry name" value="6-PGluconate_DH-like_C_sf"/>
</dbReference>
<dbReference type="InterPro" id="IPR013328">
    <property type="entry name" value="6PGD_dom2"/>
</dbReference>
<dbReference type="InterPro" id="IPR006114">
    <property type="entry name" value="6PGDH_C"/>
</dbReference>
<dbReference type="InterPro" id="IPR006113">
    <property type="entry name" value="6PGDH_Gnd/GntZ"/>
</dbReference>
<dbReference type="InterPro" id="IPR006115">
    <property type="entry name" value="6PGDH_NADP-bd"/>
</dbReference>
<dbReference type="InterPro" id="IPR006184">
    <property type="entry name" value="6PGdom_BS"/>
</dbReference>
<dbReference type="InterPro" id="IPR036291">
    <property type="entry name" value="NAD(P)-bd_dom_sf"/>
</dbReference>
<dbReference type="InterPro" id="IPR006183">
    <property type="entry name" value="Pgluconate_DH"/>
</dbReference>
<dbReference type="NCBIfam" id="TIGR00873">
    <property type="entry name" value="gnd"/>
    <property type="match status" value="1"/>
</dbReference>
<dbReference type="NCBIfam" id="NF006765">
    <property type="entry name" value="PRK09287.1"/>
    <property type="match status" value="1"/>
</dbReference>
<dbReference type="PANTHER" id="PTHR11811">
    <property type="entry name" value="6-PHOSPHOGLUCONATE DEHYDROGENASE"/>
    <property type="match status" value="1"/>
</dbReference>
<dbReference type="Pfam" id="PF00393">
    <property type="entry name" value="6PGD"/>
    <property type="match status" value="1"/>
</dbReference>
<dbReference type="Pfam" id="PF03446">
    <property type="entry name" value="NAD_binding_2"/>
    <property type="match status" value="1"/>
</dbReference>
<dbReference type="PIRSF" id="PIRSF000109">
    <property type="entry name" value="6PGD"/>
    <property type="match status" value="1"/>
</dbReference>
<dbReference type="PRINTS" id="PR00076">
    <property type="entry name" value="6PGDHDRGNASE"/>
</dbReference>
<dbReference type="SMART" id="SM01350">
    <property type="entry name" value="6PGD"/>
    <property type="match status" value="1"/>
</dbReference>
<dbReference type="SUPFAM" id="SSF48179">
    <property type="entry name" value="6-phosphogluconate dehydrogenase C-terminal domain-like"/>
    <property type="match status" value="1"/>
</dbReference>
<dbReference type="SUPFAM" id="SSF51735">
    <property type="entry name" value="NAD(P)-binding Rossmann-fold domains"/>
    <property type="match status" value="1"/>
</dbReference>
<dbReference type="PROSITE" id="PS00461">
    <property type="entry name" value="6PGD"/>
    <property type="match status" value="1"/>
</dbReference>
<accession>P41578</accession>
<evidence type="ECO:0000250" key="1"/>
<evidence type="ECO:0000305" key="2"/>
<protein>
    <recommendedName>
        <fullName>6-phosphogluconate dehydrogenase, decarboxylating</fullName>
        <ecNumber>1.1.1.44</ecNumber>
    </recommendedName>
</protein>
<feature type="chain" id="PRO_0000090048" description="6-phosphogluconate dehydrogenase, decarboxylating">
    <location>
        <begin position="1" status="less than"/>
        <end position="445" status="greater than"/>
    </location>
</feature>
<feature type="active site" description="Proton acceptor" evidence="1">
    <location>
        <position position="172"/>
    </location>
</feature>
<feature type="active site" description="Proton donor" evidence="1">
    <location>
        <position position="179"/>
    </location>
</feature>
<feature type="binding site" evidence="1">
    <location>
        <begin position="1"/>
        <end position="4"/>
    </location>
    <ligand>
        <name>NADP(+)</name>
        <dbReference type="ChEBI" id="CHEBI:58349"/>
    </ligand>
</feature>
<feature type="binding site" evidence="1">
    <location>
        <begin position="22"/>
        <end position="24"/>
    </location>
    <ligand>
        <name>NADP(+)</name>
        <dbReference type="ChEBI" id="CHEBI:58349"/>
    </ligand>
</feature>
<feature type="binding site" evidence="1">
    <location>
        <begin position="63"/>
        <end position="65"/>
    </location>
    <ligand>
        <name>NADP(+)</name>
        <dbReference type="ChEBI" id="CHEBI:58349"/>
    </ligand>
</feature>
<feature type="binding site" evidence="1">
    <location>
        <position position="91"/>
    </location>
    <ligand>
        <name>NADP(+)</name>
        <dbReference type="ChEBI" id="CHEBI:58349"/>
    </ligand>
</feature>
<feature type="binding site" description="in other chain" evidence="1">
    <location>
        <position position="91"/>
    </location>
    <ligand>
        <name>substrate</name>
        <note>ligand shared between dimeric partners</note>
    </ligand>
</feature>
<feature type="binding site" description="in other chain" evidence="1">
    <location>
        <begin position="117"/>
        <end position="119"/>
    </location>
    <ligand>
        <name>substrate</name>
        <note>ligand shared between dimeric partners</note>
    </ligand>
</feature>
<feature type="binding site" description="in other chain" evidence="1">
    <location>
        <begin position="175"/>
        <end position="176"/>
    </location>
    <ligand>
        <name>substrate</name>
        <note>ligand shared between dimeric partners</note>
    </ligand>
</feature>
<feature type="binding site" description="in other chain" evidence="1">
    <location>
        <position position="180"/>
    </location>
    <ligand>
        <name>substrate</name>
        <note>ligand shared between dimeric partners</note>
    </ligand>
</feature>
<feature type="binding site" description="in other chain" evidence="1">
    <location>
        <position position="249"/>
    </location>
    <ligand>
        <name>substrate</name>
        <note>ligand shared between dimeric partners</note>
    </ligand>
</feature>
<feature type="binding site" description="in other chain" evidence="1">
    <location>
        <position position="276"/>
    </location>
    <ligand>
        <name>substrate</name>
        <note>ligand shared between dimeric partners</note>
    </ligand>
</feature>
<feature type="binding site" evidence="1">
    <location>
        <position position="434"/>
    </location>
    <ligand>
        <name>substrate</name>
        <note>ligand shared between dimeric partners</note>
    </ligand>
</feature>
<feature type="binding site" evidence="1">
    <location>
        <position position="440"/>
    </location>
    <ligand>
        <name>substrate</name>
        <note>ligand shared between dimeric partners</note>
    </ligand>
</feature>
<feature type="non-terminal residue">
    <location>
        <position position="1"/>
    </location>
</feature>
<feature type="non-terminal residue">
    <location>
        <position position="445"/>
    </location>
</feature>